<reference key="1">
    <citation type="journal article" date="2004" name="Nat. Biotechnol.">
        <title>The genome sequence of the capnophilic rumen bacterium Mannheimia succiniciproducens.</title>
        <authorList>
            <person name="Hong S.H."/>
            <person name="Kim J.S."/>
            <person name="Lee S.Y."/>
            <person name="In Y.H."/>
            <person name="Choi S.S."/>
            <person name="Rih J.-K."/>
            <person name="Kim C.H."/>
            <person name="Jeong H."/>
            <person name="Hur C.G."/>
            <person name="Kim J.J."/>
        </authorList>
    </citation>
    <scope>NUCLEOTIDE SEQUENCE [LARGE SCALE GENOMIC DNA]</scope>
    <source>
        <strain>KCTC 0769BP / MBEL55E</strain>
    </source>
</reference>
<name>RS8_MANSM</name>
<evidence type="ECO:0000255" key="1">
    <source>
        <dbReference type="HAMAP-Rule" id="MF_01302"/>
    </source>
</evidence>
<evidence type="ECO:0000305" key="2"/>
<proteinExistence type="inferred from homology"/>
<protein>
    <recommendedName>
        <fullName evidence="1">Small ribosomal subunit protein uS8</fullName>
    </recommendedName>
    <alternativeName>
        <fullName evidence="2">30S ribosomal protein S8</fullName>
    </alternativeName>
</protein>
<sequence>MSMQDPIADMLTRIRNGQAASKVAISMPSSKLKVAIANVLAAEGYIESVKVLEGAKPELEITLKYFQGKPVVESIQRVSRPGLRIYKRKDELPKVMGGLGVAVVSTSKGVMTDRAARQAGLGGEIICYVA</sequence>
<organism>
    <name type="scientific">Mannheimia succiniciproducens (strain KCTC 0769BP / MBEL55E)</name>
    <dbReference type="NCBI Taxonomy" id="221988"/>
    <lineage>
        <taxon>Bacteria</taxon>
        <taxon>Pseudomonadati</taxon>
        <taxon>Pseudomonadota</taxon>
        <taxon>Gammaproteobacteria</taxon>
        <taxon>Pasteurellales</taxon>
        <taxon>Pasteurellaceae</taxon>
        <taxon>Basfia</taxon>
    </lineage>
</organism>
<keyword id="KW-0687">Ribonucleoprotein</keyword>
<keyword id="KW-0689">Ribosomal protein</keyword>
<keyword id="KW-0694">RNA-binding</keyword>
<keyword id="KW-0699">rRNA-binding</keyword>
<comment type="function">
    <text evidence="1">One of the primary rRNA binding proteins, it binds directly to 16S rRNA central domain where it helps coordinate assembly of the platform of the 30S subunit.</text>
</comment>
<comment type="subunit">
    <text evidence="1">Part of the 30S ribosomal subunit. Contacts proteins S5 and S12.</text>
</comment>
<comment type="similarity">
    <text evidence="1">Belongs to the universal ribosomal protein uS8 family.</text>
</comment>
<gene>
    <name evidence="1" type="primary">rpsH</name>
    <name type="ordered locus">MS2034</name>
</gene>
<accession>Q65QW9</accession>
<dbReference type="EMBL" id="AE016827">
    <property type="protein sequence ID" value="AAU38641.1"/>
    <property type="molecule type" value="Genomic_DNA"/>
</dbReference>
<dbReference type="RefSeq" id="WP_011201192.1">
    <property type="nucleotide sequence ID" value="NC_006300.1"/>
</dbReference>
<dbReference type="SMR" id="Q65QW9"/>
<dbReference type="STRING" id="221988.MS2034"/>
<dbReference type="KEGG" id="msu:MS2034"/>
<dbReference type="eggNOG" id="COG0096">
    <property type="taxonomic scope" value="Bacteria"/>
</dbReference>
<dbReference type="HOGENOM" id="CLU_098428_0_0_6"/>
<dbReference type="OrthoDB" id="9802617at2"/>
<dbReference type="Proteomes" id="UP000000607">
    <property type="component" value="Chromosome"/>
</dbReference>
<dbReference type="GO" id="GO:1990904">
    <property type="term" value="C:ribonucleoprotein complex"/>
    <property type="evidence" value="ECO:0007669"/>
    <property type="project" value="UniProtKB-KW"/>
</dbReference>
<dbReference type="GO" id="GO:0005840">
    <property type="term" value="C:ribosome"/>
    <property type="evidence" value="ECO:0007669"/>
    <property type="project" value="UniProtKB-KW"/>
</dbReference>
<dbReference type="GO" id="GO:0019843">
    <property type="term" value="F:rRNA binding"/>
    <property type="evidence" value="ECO:0007669"/>
    <property type="project" value="UniProtKB-UniRule"/>
</dbReference>
<dbReference type="GO" id="GO:0003735">
    <property type="term" value="F:structural constituent of ribosome"/>
    <property type="evidence" value="ECO:0007669"/>
    <property type="project" value="InterPro"/>
</dbReference>
<dbReference type="GO" id="GO:0006412">
    <property type="term" value="P:translation"/>
    <property type="evidence" value="ECO:0007669"/>
    <property type="project" value="UniProtKB-UniRule"/>
</dbReference>
<dbReference type="FunFam" id="3.30.1370.30:FF:000003">
    <property type="entry name" value="30S ribosomal protein S8"/>
    <property type="match status" value="1"/>
</dbReference>
<dbReference type="FunFam" id="3.30.1490.10:FF:000001">
    <property type="entry name" value="30S ribosomal protein S8"/>
    <property type="match status" value="1"/>
</dbReference>
<dbReference type="Gene3D" id="3.30.1370.30">
    <property type="match status" value="1"/>
</dbReference>
<dbReference type="Gene3D" id="3.30.1490.10">
    <property type="match status" value="1"/>
</dbReference>
<dbReference type="HAMAP" id="MF_01302_B">
    <property type="entry name" value="Ribosomal_uS8_B"/>
    <property type="match status" value="1"/>
</dbReference>
<dbReference type="InterPro" id="IPR000630">
    <property type="entry name" value="Ribosomal_uS8"/>
</dbReference>
<dbReference type="InterPro" id="IPR047863">
    <property type="entry name" value="Ribosomal_uS8_CS"/>
</dbReference>
<dbReference type="InterPro" id="IPR035987">
    <property type="entry name" value="Ribosomal_uS8_sf"/>
</dbReference>
<dbReference type="NCBIfam" id="NF001109">
    <property type="entry name" value="PRK00136.1"/>
    <property type="match status" value="1"/>
</dbReference>
<dbReference type="PANTHER" id="PTHR11758">
    <property type="entry name" value="40S RIBOSOMAL PROTEIN S15A"/>
    <property type="match status" value="1"/>
</dbReference>
<dbReference type="Pfam" id="PF00410">
    <property type="entry name" value="Ribosomal_S8"/>
    <property type="match status" value="1"/>
</dbReference>
<dbReference type="SUPFAM" id="SSF56047">
    <property type="entry name" value="Ribosomal protein S8"/>
    <property type="match status" value="1"/>
</dbReference>
<dbReference type="PROSITE" id="PS00053">
    <property type="entry name" value="RIBOSOMAL_S8"/>
    <property type="match status" value="1"/>
</dbReference>
<feature type="chain" id="PRO_0000126432" description="Small ribosomal subunit protein uS8">
    <location>
        <begin position="1"/>
        <end position="130"/>
    </location>
</feature>